<comment type="function">
    <text evidence="1">NDH-1 shuttles electrons from NADH, via FMN and iron-sulfur (Fe-S) centers, to quinones in the respiratory chain. The immediate electron acceptor for the enzyme in this species is believed to be ubiquinone. Couples the redox reaction to proton translocation (for every two electrons transferred, four hydrogen ions are translocated across the cytoplasmic membrane), and thus conserves the redox energy in a proton gradient. This subunit may bind ubiquinone.</text>
</comment>
<comment type="catalytic activity">
    <reaction evidence="1">
        <text>a quinone + NADH + 5 H(+)(in) = a quinol + NAD(+) + 4 H(+)(out)</text>
        <dbReference type="Rhea" id="RHEA:57888"/>
        <dbReference type="ChEBI" id="CHEBI:15378"/>
        <dbReference type="ChEBI" id="CHEBI:24646"/>
        <dbReference type="ChEBI" id="CHEBI:57540"/>
        <dbReference type="ChEBI" id="CHEBI:57945"/>
        <dbReference type="ChEBI" id="CHEBI:132124"/>
    </reaction>
</comment>
<comment type="subunit">
    <text evidence="1">NDH-1 is composed of 13 different subunits. Subunits NuoA, H, J, K, L, M, N constitute the membrane sector of the complex.</text>
</comment>
<comment type="subcellular location">
    <subcellularLocation>
        <location evidence="1">Cell inner membrane</location>
        <topology evidence="1">Multi-pass membrane protein</topology>
    </subcellularLocation>
</comment>
<comment type="similarity">
    <text evidence="1">Belongs to the complex I subunit 1 family.</text>
</comment>
<gene>
    <name evidence="1" type="primary">nuoH</name>
    <name type="ordered locus">YPN_2144</name>
    <name type="ORF">YP516_2393</name>
</gene>
<sequence length="325" mass="36185">MSWFTPELIEILISVLKAVVILLVVVTCGAFMSFGERRLLGLFQNRYGPNRVGWGGSLQLVADMIKMFFKEDWVPRFSDRAIFTLAPVIAFTSLLLSFAIVPVSPTWAVADLNIGILFFLMMAGLAVYAVLFAGWASNNKYSLLGAMRASAQTLSYEVFLGLSLMGVVAQAGSFNMQDIVNSQEHVWNVIPQFFGFLTFAIAGVAVCHRHPFDQPEAEQELADGYHIEYSGMKFGLFFVGEYIGIVTVSALIVTLFFGGWQGPFLPPFIWFALKTAFFMVMFILIRASLPRPRYDQVMSFGWKVCLPLTLLNLLATAAVILYNAQ</sequence>
<keyword id="KW-0997">Cell inner membrane</keyword>
<keyword id="KW-1003">Cell membrane</keyword>
<keyword id="KW-0472">Membrane</keyword>
<keyword id="KW-0520">NAD</keyword>
<keyword id="KW-0874">Quinone</keyword>
<keyword id="KW-1278">Translocase</keyword>
<keyword id="KW-0812">Transmembrane</keyword>
<keyword id="KW-1133">Transmembrane helix</keyword>
<keyword id="KW-0830">Ubiquinone</keyword>
<reference key="1">
    <citation type="journal article" date="2006" name="J. Bacteriol.">
        <title>Complete genome sequence of Yersinia pestis strains Antiqua and Nepal516: evidence of gene reduction in an emerging pathogen.</title>
        <authorList>
            <person name="Chain P.S.G."/>
            <person name="Hu P."/>
            <person name="Malfatti S.A."/>
            <person name="Radnedge L."/>
            <person name="Larimer F."/>
            <person name="Vergez L.M."/>
            <person name="Worsham P."/>
            <person name="Chu M.C."/>
            <person name="Andersen G.L."/>
        </authorList>
    </citation>
    <scope>NUCLEOTIDE SEQUENCE [LARGE SCALE GENOMIC DNA]</scope>
    <source>
        <strain>Nepal516</strain>
    </source>
</reference>
<reference key="2">
    <citation type="submission" date="2009-04" db="EMBL/GenBank/DDBJ databases">
        <title>Yersinia pestis Nepal516A whole genome shotgun sequencing project.</title>
        <authorList>
            <person name="Plunkett G. III"/>
            <person name="Anderson B.D."/>
            <person name="Baumler D.J."/>
            <person name="Burland V."/>
            <person name="Cabot E.L."/>
            <person name="Glasner J.D."/>
            <person name="Mau B."/>
            <person name="Neeno-Eckwall E."/>
            <person name="Perna N.T."/>
            <person name="Munk A.C."/>
            <person name="Tapia R."/>
            <person name="Green L.D."/>
            <person name="Rogers Y.C."/>
            <person name="Detter J.C."/>
            <person name="Bruce D.C."/>
            <person name="Brettin T.S."/>
        </authorList>
    </citation>
    <scope>NUCLEOTIDE SEQUENCE [LARGE SCALE GENOMIC DNA]</scope>
    <source>
        <strain>Nepal516</strain>
    </source>
</reference>
<protein>
    <recommendedName>
        <fullName evidence="1">NADH-quinone oxidoreductase subunit H</fullName>
        <ecNumber evidence="1">7.1.1.-</ecNumber>
    </recommendedName>
    <alternativeName>
        <fullName evidence="1">NADH dehydrogenase I subunit H</fullName>
    </alternativeName>
    <alternativeName>
        <fullName evidence="1">NDH-1 subunit H</fullName>
    </alternativeName>
</protein>
<feature type="chain" id="PRO_0000298860" description="NADH-quinone oxidoreductase subunit H">
    <location>
        <begin position="1"/>
        <end position="325"/>
    </location>
</feature>
<feature type="transmembrane region" description="Helical" evidence="1">
    <location>
        <begin position="11"/>
        <end position="31"/>
    </location>
</feature>
<feature type="transmembrane region" description="Helical" evidence="1">
    <location>
        <begin position="81"/>
        <end position="101"/>
    </location>
</feature>
<feature type="transmembrane region" description="Helical" evidence="1">
    <location>
        <begin position="114"/>
        <end position="134"/>
    </location>
</feature>
<feature type="transmembrane region" description="Helical" evidence="1">
    <location>
        <begin position="154"/>
        <end position="174"/>
    </location>
</feature>
<feature type="transmembrane region" description="Helical" evidence="1">
    <location>
        <begin position="186"/>
        <end position="206"/>
    </location>
</feature>
<feature type="transmembrane region" description="Helical" evidence="1">
    <location>
        <begin position="237"/>
        <end position="257"/>
    </location>
</feature>
<feature type="transmembrane region" description="Helical" evidence="1">
    <location>
        <begin position="265"/>
        <end position="285"/>
    </location>
</feature>
<feature type="transmembrane region" description="Helical" evidence="1">
    <location>
        <begin position="304"/>
        <end position="324"/>
    </location>
</feature>
<accession>Q1CHQ7</accession>
<accession>C4GV68</accession>
<evidence type="ECO:0000255" key="1">
    <source>
        <dbReference type="HAMAP-Rule" id="MF_01350"/>
    </source>
</evidence>
<organism>
    <name type="scientific">Yersinia pestis bv. Antiqua (strain Nepal516)</name>
    <dbReference type="NCBI Taxonomy" id="377628"/>
    <lineage>
        <taxon>Bacteria</taxon>
        <taxon>Pseudomonadati</taxon>
        <taxon>Pseudomonadota</taxon>
        <taxon>Gammaproteobacteria</taxon>
        <taxon>Enterobacterales</taxon>
        <taxon>Yersiniaceae</taxon>
        <taxon>Yersinia</taxon>
    </lineage>
</organism>
<proteinExistence type="inferred from homology"/>
<name>NUOH_YERPN</name>
<dbReference type="EC" id="7.1.1.-" evidence="1"/>
<dbReference type="EMBL" id="CP000305">
    <property type="protein sequence ID" value="ABG18473.1"/>
    <property type="molecule type" value="Genomic_DNA"/>
</dbReference>
<dbReference type="EMBL" id="ACNQ01000013">
    <property type="protein sequence ID" value="EEO76196.1"/>
    <property type="molecule type" value="Genomic_DNA"/>
</dbReference>
<dbReference type="RefSeq" id="WP_002210274.1">
    <property type="nucleotide sequence ID" value="NZ_ACNQ01000013.1"/>
</dbReference>
<dbReference type="SMR" id="Q1CHQ7"/>
<dbReference type="GeneID" id="96666080"/>
<dbReference type="KEGG" id="ypn:YPN_2144"/>
<dbReference type="HOGENOM" id="CLU_015134_0_1_6"/>
<dbReference type="Proteomes" id="UP000008936">
    <property type="component" value="Chromosome"/>
</dbReference>
<dbReference type="GO" id="GO:0005886">
    <property type="term" value="C:plasma membrane"/>
    <property type="evidence" value="ECO:0007669"/>
    <property type="project" value="UniProtKB-SubCell"/>
</dbReference>
<dbReference type="GO" id="GO:0003954">
    <property type="term" value="F:NADH dehydrogenase activity"/>
    <property type="evidence" value="ECO:0007669"/>
    <property type="project" value="TreeGrafter"/>
</dbReference>
<dbReference type="GO" id="GO:0016655">
    <property type="term" value="F:oxidoreductase activity, acting on NAD(P)H, quinone or similar compound as acceptor"/>
    <property type="evidence" value="ECO:0007669"/>
    <property type="project" value="UniProtKB-UniRule"/>
</dbReference>
<dbReference type="GO" id="GO:0048038">
    <property type="term" value="F:quinone binding"/>
    <property type="evidence" value="ECO:0007669"/>
    <property type="project" value="UniProtKB-KW"/>
</dbReference>
<dbReference type="GO" id="GO:0009060">
    <property type="term" value="P:aerobic respiration"/>
    <property type="evidence" value="ECO:0007669"/>
    <property type="project" value="TreeGrafter"/>
</dbReference>
<dbReference type="HAMAP" id="MF_01350">
    <property type="entry name" value="NDH1_NuoH"/>
    <property type="match status" value="1"/>
</dbReference>
<dbReference type="InterPro" id="IPR001694">
    <property type="entry name" value="NADH_UbQ_OxRdtase_su1/FPO"/>
</dbReference>
<dbReference type="InterPro" id="IPR018086">
    <property type="entry name" value="NADH_UbQ_OxRdtase_su1_CS"/>
</dbReference>
<dbReference type="NCBIfam" id="NF004740">
    <property type="entry name" value="PRK06076.1-1"/>
    <property type="match status" value="1"/>
</dbReference>
<dbReference type="NCBIfam" id="NF004741">
    <property type="entry name" value="PRK06076.1-2"/>
    <property type="match status" value="1"/>
</dbReference>
<dbReference type="PANTHER" id="PTHR11432">
    <property type="entry name" value="NADH DEHYDROGENASE SUBUNIT 1"/>
    <property type="match status" value="1"/>
</dbReference>
<dbReference type="PANTHER" id="PTHR11432:SF3">
    <property type="entry name" value="NADH-UBIQUINONE OXIDOREDUCTASE CHAIN 1"/>
    <property type="match status" value="1"/>
</dbReference>
<dbReference type="Pfam" id="PF00146">
    <property type="entry name" value="NADHdh"/>
    <property type="match status" value="1"/>
</dbReference>
<dbReference type="PROSITE" id="PS00667">
    <property type="entry name" value="COMPLEX1_ND1_1"/>
    <property type="match status" value="1"/>
</dbReference>
<dbReference type="PROSITE" id="PS00668">
    <property type="entry name" value="COMPLEX1_ND1_2"/>
    <property type="match status" value="1"/>
</dbReference>